<feature type="chain" id="PRO_0000413660" description="Antimicrobial peptide AJN-10">
    <location>
        <begin position="1"/>
        <end position="20" status="greater than"/>
    </location>
</feature>
<feature type="unsure residue" description="Q or T">
    <location>
        <position position="16"/>
    </location>
</feature>
<feature type="non-terminal residue">
    <location>
        <position position="20"/>
    </location>
</feature>
<proteinExistence type="evidence at protein level"/>
<dbReference type="GO" id="GO:0005576">
    <property type="term" value="C:extracellular region"/>
    <property type="evidence" value="ECO:0007669"/>
    <property type="project" value="UniProtKB-SubCell"/>
</dbReference>
<dbReference type="GO" id="GO:0042742">
    <property type="term" value="P:defense response to bacterium"/>
    <property type="evidence" value="ECO:0007669"/>
    <property type="project" value="UniProtKB-KW"/>
</dbReference>
<protein>
    <recommendedName>
        <fullName>Antimicrobial peptide AJN-10</fullName>
    </recommendedName>
</protein>
<comment type="function">
    <text evidence="1">Displays antimicrobial activity against the Gram-negative bacterium A.hydrophila.</text>
</comment>
<comment type="subcellular location">
    <subcellularLocation>
        <location evidence="1">Secreted</location>
    </subcellularLocation>
</comment>
<comment type="mass spectrometry" mass="6044.28" method="MALDI" evidence="1"/>
<reference key="1">
    <citation type="journal article" date="2011" name="Protein J.">
        <title>Isolation and identification of a novel inducible antibacterial peptide from the skin mucus of Japanese eel, Anguilla japonica.</title>
        <authorList>
            <person name="Liang Y."/>
            <person name="Guan R."/>
            <person name="Huang W."/>
            <person name="Xu T."/>
        </authorList>
    </citation>
    <scope>PROTEIN SEQUENCE</scope>
    <scope>FUNCTION</scope>
    <scope>SUBCELLULAR LOCATION</scope>
    <scope>MASS SPECTROMETRY</scope>
    <source>
        <tissue>Skin mucus</tissue>
    </source>
</reference>
<sequence length="20" mass="2164">GCPQTPRCTNYAEKGQCPPN</sequence>
<organism>
    <name type="scientific">Anguilla japonica</name>
    <name type="common">Japanese eel</name>
    <dbReference type="NCBI Taxonomy" id="7937"/>
    <lineage>
        <taxon>Eukaryota</taxon>
        <taxon>Metazoa</taxon>
        <taxon>Chordata</taxon>
        <taxon>Craniata</taxon>
        <taxon>Vertebrata</taxon>
        <taxon>Euteleostomi</taxon>
        <taxon>Actinopterygii</taxon>
        <taxon>Neopterygii</taxon>
        <taxon>Teleostei</taxon>
        <taxon>Anguilliformes</taxon>
        <taxon>Anguillidae</taxon>
        <taxon>Anguilla</taxon>
    </lineage>
</organism>
<keyword id="KW-0044">Antibiotic</keyword>
<keyword id="KW-0929">Antimicrobial</keyword>
<keyword id="KW-0903">Direct protein sequencing</keyword>
<keyword id="KW-0964">Secreted</keyword>
<evidence type="ECO:0000269" key="1">
    <source>
    </source>
</evidence>
<accession>P0DJ30</accession>
<name>AJN10_ANGJA</name>